<evidence type="ECO:0000255" key="1">
    <source>
        <dbReference type="HAMAP-Rule" id="MF_01393"/>
    </source>
</evidence>
<name>ATPI_EUGGR</name>
<feature type="chain" id="PRO_0000002583" description="ATP synthase subunit a, chloroplastic">
    <location>
        <begin position="1"/>
        <end position="251"/>
    </location>
</feature>
<feature type="transmembrane region" description="Helical" evidence="1">
    <location>
        <begin position="3"/>
        <end position="23"/>
    </location>
</feature>
<feature type="transmembrane region" description="Helical" evidence="1">
    <location>
        <begin position="38"/>
        <end position="58"/>
    </location>
</feature>
<feature type="transmembrane region" description="Helical" evidence="1">
    <location>
        <begin position="99"/>
        <end position="119"/>
    </location>
</feature>
<feature type="transmembrane region" description="Helical" evidence="1">
    <location>
        <begin position="138"/>
        <end position="158"/>
    </location>
</feature>
<feature type="transmembrane region" description="Helical" evidence="1">
    <location>
        <begin position="203"/>
        <end position="223"/>
    </location>
</feature>
<feature type="transmembrane region" description="Helical" evidence="1">
    <location>
        <begin position="224"/>
        <end position="244"/>
    </location>
</feature>
<organism>
    <name type="scientific">Euglena gracilis</name>
    <dbReference type="NCBI Taxonomy" id="3039"/>
    <lineage>
        <taxon>Eukaryota</taxon>
        <taxon>Discoba</taxon>
        <taxon>Euglenozoa</taxon>
        <taxon>Euglenida</taxon>
        <taxon>Spirocuta</taxon>
        <taxon>Euglenophyceae</taxon>
        <taxon>Euglenales</taxon>
        <taxon>Euglenaceae</taxon>
        <taxon>Euglena</taxon>
    </lineage>
</organism>
<reference key="1">
    <citation type="journal article" date="1993" name="Curr. Genet.">
        <title>A novel Euglena gracilis chloroplast operon encoding four ATP synthase subunits and two ribosomal proteins contains 17 introns.</title>
        <authorList>
            <person name="Drager R.G."/>
            <person name="Hallick R.B."/>
        </authorList>
    </citation>
    <scope>NUCLEOTIDE SEQUENCE [GENOMIC DNA]</scope>
    <source>
        <strain>Z / UTEX 753</strain>
    </source>
</reference>
<reference key="2">
    <citation type="journal article" date="1993" name="Nucleic Acids Res.">
        <title>Complete sequence of Euglena gracilis chloroplast DNA.</title>
        <authorList>
            <person name="Hallick R.B."/>
            <person name="Hong L."/>
            <person name="Drager R.G."/>
            <person name="Favreau M.R."/>
            <person name="Monfort A."/>
            <person name="Orsat B."/>
            <person name="Spielmann A."/>
            <person name="Stutz E."/>
        </authorList>
    </citation>
    <scope>NUCLEOTIDE SEQUENCE [LARGE SCALE GENOMIC DNA]</scope>
    <source>
        <strain>Z / UTEX 753</strain>
    </source>
</reference>
<protein>
    <recommendedName>
        <fullName evidence="1">ATP synthase subunit a, chloroplastic</fullName>
    </recommendedName>
    <alternativeName>
        <fullName evidence="1">ATP synthase F0 sector subunit a</fullName>
    </alternativeName>
    <alternativeName>
        <fullName evidence="1">F-ATPase subunit IV</fullName>
    </alternativeName>
</protein>
<comment type="function">
    <text evidence="1">Key component of the proton channel; it plays a direct role in the translocation of protons across the membrane.</text>
</comment>
<comment type="subunit">
    <text evidence="1">F-type ATPases have 2 components, CF(1) - the catalytic core - and CF(0) - the membrane proton channel. CF(1) has five subunits: alpha(3), beta(3), gamma(1), delta(1), epsilon(1). CF(0) has four main subunits: a, b, b' and c.</text>
</comment>
<comment type="subcellular location">
    <subcellularLocation>
        <location evidence="1">Plastid</location>
        <location evidence="1">Chloroplast thylakoid membrane</location>
        <topology evidence="1">Multi-pass membrane protein</topology>
    </subcellularLocation>
</comment>
<comment type="similarity">
    <text evidence="1">Belongs to the ATPase A chain family.</text>
</comment>
<proteinExistence type="inferred from homology"/>
<dbReference type="EMBL" id="Z11874">
    <property type="protein sequence ID" value="CAA77929.1"/>
    <property type="molecule type" value="Genomic_DNA"/>
</dbReference>
<dbReference type="EMBL" id="X70810">
    <property type="protein sequence ID" value="CAA50112.1"/>
    <property type="molecule type" value="Genomic_DNA"/>
</dbReference>
<dbReference type="PIR" id="S29798">
    <property type="entry name" value="PWEGAC"/>
</dbReference>
<dbReference type="RefSeq" id="NP_041925.1">
    <property type="nucleotide sequence ID" value="NC_001603.2"/>
</dbReference>
<dbReference type="SMR" id="P30391"/>
<dbReference type="GeneID" id="807502"/>
<dbReference type="GO" id="GO:0009535">
    <property type="term" value="C:chloroplast thylakoid membrane"/>
    <property type="evidence" value="ECO:0007669"/>
    <property type="project" value="UniProtKB-SubCell"/>
</dbReference>
<dbReference type="GO" id="GO:0005886">
    <property type="term" value="C:plasma membrane"/>
    <property type="evidence" value="ECO:0007669"/>
    <property type="project" value="UniProtKB-UniRule"/>
</dbReference>
<dbReference type="GO" id="GO:0045259">
    <property type="term" value="C:proton-transporting ATP synthase complex"/>
    <property type="evidence" value="ECO:0007669"/>
    <property type="project" value="UniProtKB-KW"/>
</dbReference>
<dbReference type="GO" id="GO:0046933">
    <property type="term" value="F:proton-transporting ATP synthase activity, rotational mechanism"/>
    <property type="evidence" value="ECO:0007669"/>
    <property type="project" value="UniProtKB-UniRule"/>
</dbReference>
<dbReference type="CDD" id="cd00310">
    <property type="entry name" value="ATP-synt_Fo_a_6"/>
    <property type="match status" value="1"/>
</dbReference>
<dbReference type="FunFam" id="1.20.120.220:FF:000001">
    <property type="entry name" value="ATP synthase subunit a, chloroplastic"/>
    <property type="match status" value="1"/>
</dbReference>
<dbReference type="Gene3D" id="1.20.120.220">
    <property type="entry name" value="ATP synthase, F0 complex, subunit A"/>
    <property type="match status" value="1"/>
</dbReference>
<dbReference type="HAMAP" id="MF_01393">
    <property type="entry name" value="ATP_synth_a_bact"/>
    <property type="match status" value="1"/>
</dbReference>
<dbReference type="InterPro" id="IPR045082">
    <property type="entry name" value="ATP_syn_F0_a_bact/chloroplast"/>
</dbReference>
<dbReference type="InterPro" id="IPR000568">
    <property type="entry name" value="ATP_synth_F0_asu"/>
</dbReference>
<dbReference type="InterPro" id="IPR023011">
    <property type="entry name" value="ATP_synth_F0_asu_AS"/>
</dbReference>
<dbReference type="InterPro" id="IPR035908">
    <property type="entry name" value="F0_ATP_A_sf"/>
</dbReference>
<dbReference type="NCBIfam" id="TIGR01131">
    <property type="entry name" value="ATP_synt_6_or_A"/>
    <property type="match status" value="1"/>
</dbReference>
<dbReference type="PANTHER" id="PTHR42823">
    <property type="entry name" value="ATP SYNTHASE SUBUNIT A, CHLOROPLASTIC"/>
    <property type="match status" value="1"/>
</dbReference>
<dbReference type="PANTHER" id="PTHR42823:SF3">
    <property type="entry name" value="ATP SYNTHASE SUBUNIT A, CHLOROPLASTIC"/>
    <property type="match status" value="1"/>
</dbReference>
<dbReference type="Pfam" id="PF00119">
    <property type="entry name" value="ATP-synt_A"/>
    <property type="match status" value="1"/>
</dbReference>
<dbReference type="PRINTS" id="PR00123">
    <property type="entry name" value="ATPASEA"/>
</dbReference>
<dbReference type="SUPFAM" id="SSF81336">
    <property type="entry name" value="F1F0 ATP synthase subunit A"/>
    <property type="match status" value="1"/>
</dbReference>
<dbReference type="PROSITE" id="PS00449">
    <property type="entry name" value="ATPASE_A"/>
    <property type="match status" value="1"/>
</dbReference>
<sequence length="251" mass="28046">MKIVLLYYFVNMFISGIFQIANVEVGQHFYWSILGFQIHGQVLINSWIVILIIGFLSIYTTKNLTLVPANKQIFIELVTEFITDISKTQIGEKEYSKWVPYIGTMFLFIFVSNWSGALIPWKIIELPNGELGAPTNDINTTAGLAILTSLAYFYAGLNKKGLTYFKKYVQPTPILLPINILEDFTKPLSLSFRLFGNILADELVVAVLVSLVPLIVPVPLIFLGLFTSGIQALIFATLSGSYIGEAMEGHH</sequence>
<gene>
    <name evidence="1" type="primary">atpI</name>
</gene>
<accession>P30391</accession>
<geneLocation type="chloroplast"/>
<keyword id="KW-0066">ATP synthesis</keyword>
<keyword id="KW-0138">CF(0)</keyword>
<keyword id="KW-0150">Chloroplast</keyword>
<keyword id="KW-0375">Hydrogen ion transport</keyword>
<keyword id="KW-0406">Ion transport</keyword>
<keyword id="KW-0472">Membrane</keyword>
<keyword id="KW-0934">Plastid</keyword>
<keyword id="KW-0793">Thylakoid</keyword>
<keyword id="KW-0812">Transmembrane</keyword>
<keyword id="KW-1133">Transmembrane helix</keyword>
<keyword id="KW-0813">Transport</keyword>